<proteinExistence type="predicted"/>
<keyword id="KW-1185">Reference proteome</keyword>
<organism>
    <name type="scientific">Mycobacterium phage L5</name>
    <name type="common">Mycobacteriophage L5</name>
    <dbReference type="NCBI Taxonomy" id="31757"/>
    <lineage>
        <taxon>Viruses</taxon>
        <taxon>Duplodnaviria</taxon>
        <taxon>Heunggongvirae</taxon>
        <taxon>Uroviricota</taxon>
        <taxon>Caudoviricetes</taxon>
        <taxon>Fromanvirus</taxon>
    </lineage>
</organism>
<feature type="chain" id="PRO_0000164719" description="Gene 15 protein">
    <location>
        <begin position="1"/>
        <end position="294"/>
    </location>
</feature>
<reference key="1">
    <citation type="journal article" date="1993" name="Mol. Microbiol.">
        <title>DNA sequence, structure and gene expression of mycobacteriophage L5: a phage system for mycobacterial genetics.</title>
        <authorList>
            <person name="Hatfull G.F."/>
            <person name="Sarkis G.J."/>
        </authorList>
    </citation>
    <scope>NUCLEOTIDE SEQUENCE [LARGE SCALE GENOMIC DNA]</scope>
</reference>
<accession>Q05221</accession>
<organismHost>
    <name type="scientific">Mycobacterium</name>
    <dbReference type="NCBI Taxonomy" id="1763"/>
</organismHost>
<sequence length="294" mass="32918">MTAEEYAAAQAAITAGLATYVQRFASLFVGPALAVGEWLRLLQVLFPEIQRRYADAAALGRDFYDSQRALHHPELPRNERFRGELRWEWFVQNMEPARKEMSQADSPPSATSKLALAAVREVEMAARRQIIGAVKNDPAPQIVQGWARVATGRETCAWCLMLISRGAELNHKGNFAYSSAEAAGLNLDDETVIDLWNESGHDLEKFREETREDFEKWHAGCDCLVVPVFDVQNWPGRDAALRAQQLWIEASDEADDLIASGKARSKNKNTETLNALRRRLARGEITMSNYALAA</sequence>
<protein>
    <recommendedName>
        <fullName>Gene 15 protein</fullName>
    </recommendedName>
    <alternativeName>
        <fullName>Gp15</fullName>
    </alternativeName>
</protein>
<dbReference type="EMBL" id="Z18946">
    <property type="protein sequence ID" value="CAA79391.1"/>
    <property type="molecule type" value="Genomic_DNA"/>
</dbReference>
<dbReference type="PIR" id="S30960">
    <property type="entry name" value="S30960"/>
</dbReference>
<dbReference type="RefSeq" id="NP_039679.1">
    <property type="nucleotide sequence ID" value="NC_001335.1"/>
</dbReference>
<dbReference type="SMR" id="Q05221"/>
<dbReference type="GeneID" id="2942931"/>
<dbReference type="KEGG" id="vg:2942931"/>
<dbReference type="OrthoDB" id="5304at10239"/>
<dbReference type="Proteomes" id="UP000002123">
    <property type="component" value="Genome"/>
</dbReference>
<dbReference type="Pfam" id="PF25310">
    <property type="entry name" value="VG15"/>
    <property type="match status" value="1"/>
</dbReference>
<gene>
    <name type="primary">15</name>
</gene>
<name>VG15_BPML5</name>